<name>Y1436_STAA8</name>
<gene>
    <name type="ordered locus">SAOUHSC_01436</name>
</gene>
<evidence type="ECO:0000305" key="1"/>
<feature type="chain" id="PRO_0000272009" description="Bacilliredoxin SAOUHSC_01436">
    <location>
        <begin position="1"/>
        <end position="145"/>
    </location>
</feature>
<accession>Q2FYK4</accession>
<reference key="1">
    <citation type="book" date="2006" name="Gram positive pathogens, 2nd edition">
        <title>The Staphylococcus aureus NCTC 8325 genome.</title>
        <editorList>
            <person name="Fischetti V."/>
            <person name="Novick R."/>
            <person name="Ferretti J."/>
            <person name="Portnoy D."/>
            <person name="Rood J."/>
        </editorList>
        <authorList>
            <person name="Gillaspy A.F."/>
            <person name="Worrell V."/>
            <person name="Orvis J."/>
            <person name="Roe B.A."/>
            <person name="Dyer D.W."/>
            <person name="Iandolo J.J."/>
        </authorList>
    </citation>
    <scope>NUCLEOTIDE SEQUENCE [LARGE SCALE GENOMIC DNA]</scope>
    <source>
        <strain>NCTC 8325 / PS 47</strain>
    </source>
</reference>
<protein>
    <recommendedName>
        <fullName evidence="1">Bacilliredoxin SAOUHSC_01436</fullName>
    </recommendedName>
</protein>
<sequence>MNAYDAYMKEIAQQMRGELTQNGFTSLETSEAVSEYMNQVNADDTTFVVINSTCGCAAGLARPAAVAVATQNEHRPTNTVTVFAGQDKEATATMREFIQQAPSSPSYALFKGQDLVYFMPREFIEGRDINDIAMDLKDAFDENCK</sequence>
<comment type="similarity">
    <text evidence="1">Belongs to the bacilliredoxin family.</text>
</comment>
<keyword id="KW-1185">Reference proteome</keyword>
<dbReference type="EMBL" id="CP000253">
    <property type="protein sequence ID" value="ABD30528.1"/>
    <property type="molecule type" value="Genomic_DNA"/>
</dbReference>
<dbReference type="RefSeq" id="YP_499961.1">
    <property type="nucleotide sequence ID" value="NC_007795.1"/>
</dbReference>
<dbReference type="SMR" id="Q2FYK4"/>
<dbReference type="STRING" id="93061.SAOUHSC_01436"/>
<dbReference type="PaxDb" id="1280-SAXN108_1449"/>
<dbReference type="GeneID" id="3920217"/>
<dbReference type="KEGG" id="sao:SAOUHSC_01436"/>
<dbReference type="PATRIC" id="fig|93061.5.peg.1312"/>
<dbReference type="eggNOG" id="ENOG5030YIF">
    <property type="taxonomic scope" value="Bacteria"/>
</dbReference>
<dbReference type="HOGENOM" id="CLU_132521_0_0_9"/>
<dbReference type="OrthoDB" id="9793981at2"/>
<dbReference type="PRO" id="PR:Q2FYK4"/>
<dbReference type="Proteomes" id="UP000008816">
    <property type="component" value="Chromosome"/>
</dbReference>
<dbReference type="GO" id="GO:0045454">
    <property type="term" value="P:cell redox homeostasis"/>
    <property type="evidence" value="ECO:0000250"/>
    <property type="project" value="UniProtKB"/>
</dbReference>
<dbReference type="Gene3D" id="3.40.30.10">
    <property type="entry name" value="Glutaredoxin"/>
    <property type="match status" value="1"/>
</dbReference>
<dbReference type="InterPro" id="IPR009474">
    <property type="entry name" value="BrxB/BrxA"/>
</dbReference>
<dbReference type="NCBIfam" id="TIGR04191">
    <property type="entry name" value="YphP_YqiW"/>
    <property type="match status" value="1"/>
</dbReference>
<dbReference type="PANTHER" id="PTHR40052:SF2">
    <property type="entry name" value="BACILLIREDOXIN BRXA"/>
    <property type="match status" value="1"/>
</dbReference>
<dbReference type="PANTHER" id="PTHR40052">
    <property type="entry name" value="UPF0403 PROTEIN YQIW-RELATED"/>
    <property type="match status" value="1"/>
</dbReference>
<dbReference type="Pfam" id="PF06491">
    <property type="entry name" value="Disulph_isomer"/>
    <property type="match status" value="1"/>
</dbReference>
<organism>
    <name type="scientific">Staphylococcus aureus (strain NCTC 8325 / PS 47)</name>
    <dbReference type="NCBI Taxonomy" id="93061"/>
    <lineage>
        <taxon>Bacteria</taxon>
        <taxon>Bacillati</taxon>
        <taxon>Bacillota</taxon>
        <taxon>Bacilli</taxon>
        <taxon>Bacillales</taxon>
        <taxon>Staphylococcaceae</taxon>
        <taxon>Staphylococcus</taxon>
    </lineage>
</organism>
<proteinExistence type="inferred from homology"/>